<gene>
    <name evidence="1" type="primary">panC</name>
    <name type="ordered locus">Nham_2423</name>
</gene>
<accession>Q1QKN4</accession>
<name>PANC_NITHX</name>
<reference key="1">
    <citation type="submission" date="2006-03" db="EMBL/GenBank/DDBJ databases">
        <title>Complete sequence of chromosome of Nitrobacter hamburgensis X14.</title>
        <authorList>
            <consortium name="US DOE Joint Genome Institute"/>
            <person name="Copeland A."/>
            <person name="Lucas S."/>
            <person name="Lapidus A."/>
            <person name="Barry K."/>
            <person name="Detter J.C."/>
            <person name="Glavina del Rio T."/>
            <person name="Hammon N."/>
            <person name="Israni S."/>
            <person name="Dalin E."/>
            <person name="Tice H."/>
            <person name="Pitluck S."/>
            <person name="Chain P."/>
            <person name="Malfatti S."/>
            <person name="Shin M."/>
            <person name="Vergez L."/>
            <person name="Schmutz J."/>
            <person name="Larimer F."/>
            <person name="Land M."/>
            <person name="Hauser L."/>
            <person name="Kyrpides N."/>
            <person name="Ivanova N."/>
            <person name="Ward B."/>
            <person name="Arp D."/>
            <person name="Klotz M."/>
            <person name="Stein L."/>
            <person name="O'Mullan G."/>
            <person name="Starkenburg S."/>
            <person name="Sayavedra L."/>
            <person name="Poret-Peterson A.T."/>
            <person name="Gentry M.E."/>
            <person name="Bruce D."/>
            <person name="Richardson P."/>
        </authorList>
    </citation>
    <scope>NUCLEOTIDE SEQUENCE [LARGE SCALE GENOMIC DNA]</scope>
    <source>
        <strain>DSM 10229 / NCIMB 13809 / X14</strain>
    </source>
</reference>
<comment type="function">
    <text evidence="1">Catalyzes the condensation of pantoate with beta-alanine in an ATP-dependent reaction via a pantoyl-adenylate intermediate.</text>
</comment>
<comment type="catalytic activity">
    <reaction evidence="1">
        <text>(R)-pantoate + beta-alanine + ATP = (R)-pantothenate + AMP + diphosphate + H(+)</text>
        <dbReference type="Rhea" id="RHEA:10912"/>
        <dbReference type="ChEBI" id="CHEBI:15378"/>
        <dbReference type="ChEBI" id="CHEBI:15980"/>
        <dbReference type="ChEBI" id="CHEBI:29032"/>
        <dbReference type="ChEBI" id="CHEBI:30616"/>
        <dbReference type="ChEBI" id="CHEBI:33019"/>
        <dbReference type="ChEBI" id="CHEBI:57966"/>
        <dbReference type="ChEBI" id="CHEBI:456215"/>
        <dbReference type="EC" id="6.3.2.1"/>
    </reaction>
</comment>
<comment type="pathway">
    <text evidence="1">Cofactor biosynthesis; (R)-pantothenate biosynthesis; (R)-pantothenate from (R)-pantoate and beta-alanine: step 1/1.</text>
</comment>
<comment type="subunit">
    <text evidence="1">Homodimer.</text>
</comment>
<comment type="subcellular location">
    <subcellularLocation>
        <location evidence="1">Cytoplasm</location>
    </subcellularLocation>
</comment>
<comment type="miscellaneous">
    <text evidence="1">The reaction proceeds by a bi uni uni bi ping pong mechanism.</text>
</comment>
<comment type="similarity">
    <text evidence="1">Belongs to the pantothenate synthetase family.</text>
</comment>
<dbReference type="EC" id="6.3.2.1" evidence="1"/>
<dbReference type="EMBL" id="CP000319">
    <property type="protein sequence ID" value="ABE63213.1"/>
    <property type="molecule type" value="Genomic_DNA"/>
</dbReference>
<dbReference type="RefSeq" id="WP_011510886.1">
    <property type="nucleotide sequence ID" value="NC_007964.1"/>
</dbReference>
<dbReference type="SMR" id="Q1QKN4"/>
<dbReference type="STRING" id="323097.Nham_2423"/>
<dbReference type="KEGG" id="nha:Nham_2423"/>
<dbReference type="eggNOG" id="COG0414">
    <property type="taxonomic scope" value="Bacteria"/>
</dbReference>
<dbReference type="HOGENOM" id="CLU_047148_0_2_5"/>
<dbReference type="OrthoDB" id="9773087at2"/>
<dbReference type="UniPathway" id="UPA00028">
    <property type="reaction ID" value="UER00005"/>
</dbReference>
<dbReference type="Proteomes" id="UP000001953">
    <property type="component" value="Chromosome"/>
</dbReference>
<dbReference type="GO" id="GO:0005829">
    <property type="term" value="C:cytosol"/>
    <property type="evidence" value="ECO:0007669"/>
    <property type="project" value="TreeGrafter"/>
</dbReference>
<dbReference type="GO" id="GO:0005524">
    <property type="term" value="F:ATP binding"/>
    <property type="evidence" value="ECO:0007669"/>
    <property type="project" value="UniProtKB-KW"/>
</dbReference>
<dbReference type="GO" id="GO:0004592">
    <property type="term" value="F:pantoate-beta-alanine ligase activity"/>
    <property type="evidence" value="ECO:0007669"/>
    <property type="project" value="UniProtKB-UniRule"/>
</dbReference>
<dbReference type="GO" id="GO:0015940">
    <property type="term" value="P:pantothenate biosynthetic process"/>
    <property type="evidence" value="ECO:0007669"/>
    <property type="project" value="UniProtKB-UniRule"/>
</dbReference>
<dbReference type="CDD" id="cd00560">
    <property type="entry name" value="PanC"/>
    <property type="match status" value="1"/>
</dbReference>
<dbReference type="Gene3D" id="3.40.50.620">
    <property type="entry name" value="HUPs"/>
    <property type="match status" value="1"/>
</dbReference>
<dbReference type="Gene3D" id="3.30.1300.10">
    <property type="entry name" value="Pantoate-beta-alanine ligase, C-terminal domain"/>
    <property type="match status" value="1"/>
</dbReference>
<dbReference type="HAMAP" id="MF_00158">
    <property type="entry name" value="PanC"/>
    <property type="match status" value="1"/>
</dbReference>
<dbReference type="InterPro" id="IPR004821">
    <property type="entry name" value="Cyt_trans-like"/>
</dbReference>
<dbReference type="InterPro" id="IPR003721">
    <property type="entry name" value="Pantoate_ligase"/>
</dbReference>
<dbReference type="InterPro" id="IPR042176">
    <property type="entry name" value="Pantoate_ligase_C"/>
</dbReference>
<dbReference type="InterPro" id="IPR014729">
    <property type="entry name" value="Rossmann-like_a/b/a_fold"/>
</dbReference>
<dbReference type="NCBIfam" id="TIGR00125">
    <property type="entry name" value="cyt_tran_rel"/>
    <property type="match status" value="1"/>
</dbReference>
<dbReference type="NCBIfam" id="TIGR00018">
    <property type="entry name" value="panC"/>
    <property type="match status" value="1"/>
</dbReference>
<dbReference type="PANTHER" id="PTHR21299">
    <property type="entry name" value="CYTIDYLATE KINASE/PANTOATE-BETA-ALANINE LIGASE"/>
    <property type="match status" value="1"/>
</dbReference>
<dbReference type="PANTHER" id="PTHR21299:SF1">
    <property type="entry name" value="PANTOATE--BETA-ALANINE LIGASE"/>
    <property type="match status" value="1"/>
</dbReference>
<dbReference type="Pfam" id="PF02569">
    <property type="entry name" value="Pantoate_ligase"/>
    <property type="match status" value="1"/>
</dbReference>
<dbReference type="SUPFAM" id="SSF52374">
    <property type="entry name" value="Nucleotidylyl transferase"/>
    <property type="match status" value="1"/>
</dbReference>
<feature type="chain" id="PRO_0000305496" description="Pantothenate synthetase">
    <location>
        <begin position="1"/>
        <end position="283"/>
    </location>
</feature>
<feature type="active site" description="Proton donor" evidence="1">
    <location>
        <position position="41"/>
    </location>
</feature>
<feature type="binding site" evidence="1">
    <location>
        <begin position="34"/>
        <end position="41"/>
    </location>
    <ligand>
        <name>ATP</name>
        <dbReference type="ChEBI" id="CHEBI:30616"/>
    </ligand>
</feature>
<feature type="binding site" evidence="1">
    <location>
        <position position="65"/>
    </location>
    <ligand>
        <name>(R)-pantoate</name>
        <dbReference type="ChEBI" id="CHEBI:15980"/>
    </ligand>
</feature>
<feature type="binding site" evidence="1">
    <location>
        <position position="65"/>
    </location>
    <ligand>
        <name>beta-alanine</name>
        <dbReference type="ChEBI" id="CHEBI:57966"/>
    </ligand>
</feature>
<feature type="binding site" evidence="1">
    <location>
        <begin position="152"/>
        <end position="155"/>
    </location>
    <ligand>
        <name>ATP</name>
        <dbReference type="ChEBI" id="CHEBI:30616"/>
    </ligand>
</feature>
<feature type="binding site" evidence="1">
    <location>
        <position position="158"/>
    </location>
    <ligand>
        <name>(R)-pantoate</name>
        <dbReference type="ChEBI" id="CHEBI:15980"/>
    </ligand>
</feature>
<feature type="binding site" evidence="1">
    <location>
        <position position="181"/>
    </location>
    <ligand>
        <name>ATP</name>
        <dbReference type="ChEBI" id="CHEBI:30616"/>
    </ligand>
</feature>
<feature type="binding site" evidence="1">
    <location>
        <begin position="189"/>
        <end position="192"/>
    </location>
    <ligand>
        <name>ATP</name>
        <dbReference type="ChEBI" id="CHEBI:30616"/>
    </ligand>
</feature>
<organism>
    <name type="scientific">Nitrobacter hamburgensis (strain DSM 10229 / NCIMB 13809 / X14)</name>
    <dbReference type="NCBI Taxonomy" id="323097"/>
    <lineage>
        <taxon>Bacteria</taxon>
        <taxon>Pseudomonadati</taxon>
        <taxon>Pseudomonadota</taxon>
        <taxon>Alphaproteobacteria</taxon>
        <taxon>Hyphomicrobiales</taxon>
        <taxon>Nitrobacteraceae</taxon>
        <taxon>Nitrobacter</taxon>
    </lineage>
</organism>
<protein>
    <recommendedName>
        <fullName evidence="1">Pantothenate synthetase</fullName>
        <shortName evidence="1">PS</shortName>
        <ecNumber evidence="1">6.3.2.1</ecNumber>
    </recommendedName>
    <alternativeName>
        <fullName evidence="1">Pantoate--beta-alanine ligase</fullName>
    </alternativeName>
    <alternativeName>
        <fullName evidence="1">Pantoate-activating enzyme</fullName>
    </alternativeName>
</protein>
<keyword id="KW-0067">ATP-binding</keyword>
<keyword id="KW-0963">Cytoplasm</keyword>
<keyword id="KW-0436">Ligase</keyword>
<keyword id="KW-0547">Nucleotide-binding</keyword>
<keyword id="KW-0566">Pantothenate biosynthesis</keyword>
<keyword id="KW-1185">Reference proteome</keyword>
<evidence type="ECO:0000255" key="1">
    <source>
        <dbReference type="HAMAP-Rule" id="MF_00158"/>
    </source>
</evidence>
<proteinExistence type="inferred from homology"/>
<sequence length="283" mass="30951">MPRAPAIARTLPSLRRALEGLRARRATVALVPTMGALHDGHLALVRQAKRRASKVVVSIFVNPTQFAPHEDFGSYPRTWKADMAKLAEARVDLVWNPDVGTMYPPDFATRILTEGPAMAGLEDRFRPHFFGGVATVVGKLFAQCRPDVALFGQKDYQQFKVVTRMATDLDLGVKIIGVPIVRERDGLAMSSRNAYLSAEQRAVAPTLHRVMKDAAKRLRNGDDLETVMADGAGTIVDAGFALDYFEARHAETLAPVRSIKDGPVRLLVAAKIGTTRLIDNIGV</sequence>